<dbReference type="EC" id="3.4.14.5"/>
<dbReference type="EMBL" id="DS985218">
    <property type="protein sequence ID" value="EEY18938.1"/>
    <property type="molecule type" value="Genomic_DNA"/>
</dbReference>
<dbReference type="RefSeq" id="XP_003005441.1">
    <property type="nucleotide sequence ID" value="XM_003005395.1"/>
</dbReference>
<dbReference type="SMR" id="C9SJ15"/>
<dbReference type="STRING" id="526221.C9SJ15"/>
<dbReference type="ESTHER" id="vera1-dapb">
    <property type="family name" value="DPP4N_Peptidase_S9"/>
</dbReference>
<dbReference type="GlyCosmos" id="C9SJ15">
    <property type="glycosylation" value="3 sites, No reported glycans"/>
</dbReference>
<dbReference type="GeneID" id="9532123"/>
<dbReference type="KEGG" id="val:VDBG_05047"/>
<dbReference type="eggNOG" id="KOG2100">
    <property type="taxonomic scope" value="Eukaryota"/>
</dbReference>
<dbReference type="HOGENOM" id="CLU_006105_0_1_1"/>
<dbReference type="OMA" id="MRTPQEN"/>
<dbReference type="OrthoDB" id="16520at2759"/>
<dbReference type="Proteomes" id="UP000008698">
    <property type="component" value="Unassembled WGS sequence"/>
</dbReference>
<dbReference type="GO" id="GO:0005886">
    <property type="term" value="C:plasma membrane"/>
    <property type="evidence" value="ECO:0007669"/>
    <property type="project" value="TreeGrafter"/>
</dbReference>
<dbReference type="GO" id="GO:0005774">
    <property type="term" value="C:vacuolar membrane"/>
    <property type="evidence" value="ECO:0007669"/>
    <property type="project" value="UniProtKB-SubCell"/>
</dbReference>
<dbReference type="GO" id="GO:0004177">
    <property type="term" value="F:aminopeptidase activity"/>
    <property type="evidence" value="ECO:0007669"/>
    <property type="project" value="UniProtKB-KW"/>
</dbReference>
<dbReference type="GO" id="GO:0008239">
    <property type="term" value="F:dipeptidyl-peptidase activity"/>
    <property type="evidence" value="ECO:0007669"/>
    <property type="project" value="UniProtKB-EC"/>
</dbReference>
<dbReference type="GO" id="GO:0008236">
    <property type="term" value="F:serine-type peptidase activity"/>
    <property type="evidence" value="ECO:0007669"/>
    <property type="project" value="UniProtKB-KW"/>
</dbReference>
<dbReference type="GO" id="GO:0006508">
    <property type="term" value="P:proteolysis"/>
    <property type="evidence" value="ECO:0007669"/>
    <property type="project" value="UniProtKB-KW"/>
</dbReference>
<dbReference type="Gene3D" id="3.40.50.1820">
    <property type="entry name" value="alpha/beta hydrolase"/>
    <property type="match status" value="1"/>
</dbReference>
<dbReference type="Gene3D" id="2.140.10.30">
    <property type="entry name" value="Dipeptidylpeptidase IV, N-terminal domain"/>
    <property type="match status" value="1"/>
</dbReference>
<dbReference type="InterPro" id="IPR029058">
    <property type="entry name" value="AB_hydrolase_fold"/>
</dbReference>
<dbReference type="InterPro" id="IPR001375">
    <property type="entry name" value="Peptidase_S9_cat"/>
</dbReference>
<dbReference type="InterPro" id="IPR002469">
    <property type="entry name" value="Peptidase_S9B_N"/>
</dbReference>
<dbReference type="InterPro" id="IPR050278">
    <property type="entry name" value="Serine_Prot_S9B/DPPIV"/>
</dbReference>
<dbReference type="PANTHER" id="PTHR11731:SF200">
    <property type="entry name" value="DIPEPTIDYL PEPTIDASE 10, ISOFORM B"/>
    <property type="match status" value="1"/>
</dbReference>
<dbReference type="PANTHER" id="PTHR11731">
    <property type="entry name" value="PROTEASE FAMILY S9B,C DIPEPTIDYL-PEPTIDASE IV-RELATED"/>
    <property type="match status" value="1"/>
</dbReference>
<dbReference type="Pfam" id="PF00930">
    <property type="entry name" value="DPPIV_N"/>
    <property type="match status" value="1"/>
</dbReference>
<dbReference type="Pfam" id="PF00326">
    <property type="entry name" value="Peptidase_S9"/>
    <property type="match status" value="1"/>
</dbReference>
<dbReference type="SUPFAM" id="SSF53474">
    <property type="entry name" value="alpha/beta-Hydrolases"/>
    <property type="match status" value="1"/>
</dbReference>
<dbReference type="SUPFAM" id="SSF82171">
    <property type="entry name" value="DPP6 N-terminal domain-like"/>
    <property type="match status" value="1"/>
</dbReference>
<feature type="chain" id="PRO_0000412168" description="Probable dipeptidyl-aminopeptidase B">
    <location>
        <begin position="1"/>
        <end position="875"/>
    </location>
</feature>
<feature type="topological domain" description="Cytoplasmic" evidence="2">
    <location>
        <begin position="1"/>
        <end position="98"/>
    </location>
</feature>
<feature type="transmembrane region" description="Helical; Signal-anchor for type II membrane protein" evidence="2">
    <location>
        <begin position="99"/>
        <end position="119"/>
    </location>
</feature>
<feature type="topological domain" description="Vacuolar" evidence="2">
    <location>
        <begin position="120"/>
        <end position="875"/>
    </location>
</feature>
<feature type="region of interest" description="Disordered" evidence="3">
    <location>
        <begin position="1"/>
        <end position="90"/>
    </location>
</feature>
<feature type="region of interest" description="Disordered" evidence="3">
    <location>
        <begin position="689"/>
        <end position="715"/>
    </location>
</feature>
<feature type="compositionally biased region" description="Low complexity" evidence="3">
    <location>
        <begin position="19"/>
        <end position="28"/>
    </location>
</feature>
<feature type="compositionally biased region" description="Basic and acidic residues" evidence="3">
    <location>
        <begin position="33"/>
        <end position="46"/>
    </location>
</feature>
<feature type="compositionally biased region" description="Basic residues" evidence="3">
    <location>
        <begin position="699"/>
        <end position="708"/>
    </location>
</feature>
<feature type="active site" description="Charge relay system" evidence="1">
    <location>
        <position position="726"/>
    </location>
</feature>
<feature type="active site" description="Charge relay system" evidence="1">
    <location>
        <position position="803"/>
    </location>
</feature>
<feature type="active site" description="Charge relay system" evidence="1">
    <location>
        <position position="836"/>
    </location>
</feature>
<feature type="glycosylation site" description="N-linked (GlcNAc...) asparagine" evidence="2">
    <location>
        <position position="354"/>
    </location>
</feature>
<feature type="glycosylation site" description="N-linked (GlcNAc...) asparagine" evidence="2">
    <location>
        <position position="567"/>
    </location>
</feature>
<feature type="glycosylation site" description="N-linked (GlcNAc...) asparagine" evidence="2">
    <location>
        <position position="785"/>
    </location>
</feature>
<sequence length="875" mass="98704">MSEPKPIQDTLDRRHSRESSISSASTTSLVFDRLAEESEKNHDASSRPHPSAARHAYTDDNSDAIKESDINDPETGPFLGASSETTPPRKGVDRKLKKVLLIVGGFFVAAWIVSLVVFLTNKSYKHGSQIDHDPAATNRKSGKRVTLDQVQSGFWRPTSHTFSWIPGPDGEDGLLLEQEARGKHFLVVEDVRSQGSADGEAHPDAAESRTLIKDPWFYWGDQQHSILQTWPSKNQKKVLVATQKQRNWRHSFTALYWVFDVESQSAEPLDPAHPEERVQLATWNAQSDAIVFTRSNNLFLRKLADDKVTPITTDGGPEYFYGIPDWVYEEEVFSGNSATWWSADGKHVAFLRTNETEVPEYPIQYFVSRPSGAEPEVGEENYPEVRQIKYPKVGSPNPVVDLLFYDVEKGDVFTVDIDGDFPEKDKLINFVMWADGNVLVKTTNRVSDVLQVNLIDIVARTGKTVQHVDVAKIDGGWFEISHVMYIPADPKNGRPHDGYVDTVIHNDGDHLAYFTPMDNPKPVYITEGPGWEVDGSASAVDLKNNLVYFRSTKESSIQRHIYSVHLNGTDMKPFTDTTHESYYDVSFSSGAGFGLLSYQGPKVPWQKVVSTPSNPKSYERIIEENKDLTQQAKKHELPVLEYGTIKVDDVELNYVERRPPHFDKNKKYPVLFQQYSGPGSQTVTKKFAVDFQSSDGGRRTTRSPRRATGRPSATSTPTAFAIWGWSYGGFATLKTLETDAGRTFRYGMAVAPVTDWRFYDSIYTERYMRTPDLNRNGYQQTAISNTTALGANERFLVMHGVADDNVHMQNTLTLLDELDLAGVENYDVHVFPDSDHSIYFHNANRIVYDKLSNWLINAFNGEWVKVNDAKPKIES</sequence>
<comment type="function">
    <text evidence="1">Type IV dipeptidyl-peptidase which removes N-terminal dipeptides sequentially from polypeptides having unsubstituted N-termini provided that the penultimate residue is proline.</text>
</comment>
<comment type="catalytic activity">
    <reaction>
        <text>Release of an N-terminal dipeptide, Xaa-Yaa-|-Zaa-, from a polypeptide, preferentially when Yaa is Pro, provided Zaa is neither Pro nor hydroxyproline.</text>
        <dbReference type="EC" id="3.4.14.5"/>
    </reaction>
</comment>
<comment type="subcellular location">
    <subcellularLocation>
        <location evidence="1">Vacuole membrane</location>
        <topology evidence="1">Single-pass type II membrane protein</topology>
    </subcellularLocation>
    <text evidence="1">Lysosome-like vacuoles.</text>
</comment>
<comment type="similarity">
    <text evidence="4">Belongs to the peptidase S9B family.</text>
</comment>
<evidence type="ECO:0000250" key="1"/>
<evidence type="ECO:0000255" key="2"/>
<evidence type="ECO:0000256" key="3">
    <source>
        <dbReference type="SAM" id="MobiDB-lite"/>
    </source>
</evidence>
<evidence type="ECO:0000305" key="4"/>
<organism>
    <name type="scientific">Verticillium alfalfae (strain VaMs.102 / ATCC MYA-4576 / FGSC 10136)</name>
    <name type="common">Verticillium wilt of alfalfa</name>
    <name type="synonym">Verticillium albo-atrum</name>
    <dbReference type="NCBI Taxonomy" id="526221"/>
    <lineage>
        <taxon>Eukaryota</taxon>
        <taxon>Fungi</taxon>
        <taxon>Dikarya</taxon>
        <taxon>Ascomycota</taxon>
        <taxon>Pezizomycotina</taxon>
        <taxon>Sordariomycetes</taxon>
        <taxon>Hypocreomycetidae</taxon>
        <taxon>Glomerellales</taxon>
        <taxon>Plectosphaerellaceae</taxon>
        <taxon>Verticillium</taxon>
    </lineage>
</organism>
<keyword id="KW-0031">Aminopeptidase</keyword>
<keyword id="KW-0325">Glycoprotein</keyword>
<keyword id="KW-0378">Hydrolase</keyword>
<keyword id="KW-0472">Membrane</keyword>
<keyword id="KW-0645">Protease</keyword>
<keyword id="KW-1185">Reference proteome</keyword>
<keyword id="KW-0720">Serine protease</keyword>
<keyword id="KW-0735">Signal-anchor</keyword>
<keyword id="KW-0812">Transmembrane</keyword>
<keyword id="KW-1133">Transmembrane helix</keyword>
<keyword id="KW-0926">Vacuole</keyword>
<accession>C9SJ15</accession>
<reference key="1">
    <citation type="journal article" date="2011" name="PLoS Pathog.">
        <title>Comparative genomics yields insights into niche adaptation of plant vascular wilt pathogens.</title>
        <authorList>
            <person name="Klosterman S.J."/>
            <person name="Subbarao K.V."/>
            <person name="Kang S."/>
            <person name="Veronese P."/>
            <person name="Gold S.E."/>
            <person name="Thomma B.P.H.J."/>
            <person name="Chen Z."/>
            <person name="Henrissat B."/>
            <person name="Lee Y.-H."/>
            <person name="Park J."/>
            <person name="Garcia-Pedrajas M.D."/>
            <person name="Barbara D.J."/>
            <person name="Anchieta A."/>
            <person name="de Jonge R."/>
            <person name="Santhanam P."/>
            <person name="Maruthachalam K."/>
            <person name="Atallah Z."/>
            <person name="Amyotte S.G."/>
            <person name="Paz Z."/>
            <person name="Inderbitzin P."/>
            <person name="Hayes R.J."/>
            <person name="Heiman D.I."/>
            <person name="Young S."/>
            <person name="Zeng Q."/>
            <person name="Engels R."/>
            <person name="Galagan J."/>
            <person name="Cuomo C.A."/>
            <person name="Dobinson K.F."/>
            <person name="Ma L.-J."/>
        </authorList>
    </citation>
    <scope>NUCLEOTIDE SEQUENCE [LARGE SCALE GENOMIC DNA]</scope>
    <source>
        <strain>VaMs.102 / ATCC MYA-4576 / FGSC 10136</strain>
    </source>
</reference>
<name>DAPB_VERA1</name>
<proteinExistence type="inferred from homology"/>
<gene>
    <name type="primary">DAPB</name>
    <name type="ORF">VDBG_05047</name>
</gene>
<protein>
    <recommendedName>
        <fullName>Probable dipeptidyl-aminopeptidase B</fullName>
        <shortName>DPAP B</shortName>
        <ecNumber>3.4.14.5</ecNumber>
    </recommendedName>
</protein>